<sequence length="408" mass="42826">MLTKQTTGQAWKQIKGSITDVKGFTTAGAHCGLKRKRLDIGAIFCDVPANAAGVFTLNQIQAAPLKVTKESLAHSNGKLQAVLVNSGNANACTGASGLVDAYEMRALAAAKFAVPEEMVAVTSTGVIGEKMPMEKVRSGIEDLVLSKESTPFAEAILTTDTGTKEVCVEVVIDQKTVRIAGVAKGSGMIHPNMATMLGFITTDANIETAALKRALAKATDETFNRITVDGDTSTNDMVLVLASGLADNQPLDETHPDWANFYGALSACAESLAKKIAKDGEGATKLIEVQVAGAVSDEEAGKVAKAIVGSDLVKTAAYGKDGNWGRIICAIGYSGCTLDPDTIDIAIGPYETLVQSEPVVVDDAAISKYMEAETIVIKADLHQGQGVGKAWGCDLTYDYVRINAGYRT</sequence>
<keyword id="KW-0012">Acyltransferase</keyword>
<keyword id="KW-0028">Amino-acid biosynthesis</keyword>
<keyword id="KW-0055">Arginine biosynthesis</keyword>
<keyword id="KW-0068">Autocatalytic cleavage</keyword>
<keyword id="KW-0963">Cytoplasm</keyword>
<keyword id="KW-0511">Multifunctional enzyme</keyword>
<keyword id="KW-1185">Reference proteome</keyword>
<keyword id="KW-0808">Transferase</keyword>
<reference key="1">
    <citation type="submission" date="2003-10" db="EMBL/GenBank/DDBJ databases">
        <title>The complete genome sequence of the alkaliphilic Bacillus clausii KSM-K16.</title>
        <authorList>
            <person name="Takaki Y."/>
            <person name="Kageyama Y."/>
            <person name="Shimamura S."/>
            <person name="Suzuki H."/>
            <person name="Nishi S."/>
            <person name="Hatada Y."/>
            <person name="Kawai S."/>
            <person name="Ito S."/>
            <person name="Horikoshi K."/>
        </authorList>
    </citation>
    <scope>NUCLEOTIDE SEQUENCE [LARGE SCALE GENOMIC DNA]</scope>
    <source>
        <strain>KSM-K16</strain>
    </source>
</reference>
<organism>
    <name type="scientific">Shouchella clausii (strain KSM-K16)</name>
    <name type="common">Alkalihalobacillus clausii</name>
    <dbReference type="NCBI Taxonomy" id="66692"/>
    <lineage>
        <taxon>Bacteria</taxon>
        <taxon>Bacillati</taxon>
        <taxon>Bacillota</taxon>
        <taxon>Bacilli</taxon>
        <taxon>Bacillales</taxon>
        <taxon>Bacillaceae</taxon>
        <taxon>Shouchella</taxon>
    </lineage>
</organism>
<evidence type="ECO:0000255" key="1">
    <source>
        <dbReference type="HAMAP-Rule" id="MF_01106"/>
    </source>
</evidence>
<accession>Q5WEW8</accession>
<proteinExistence type="inferred from homology"/>
<protein>
    <recommendedName>
        <fullName evidence="1">Arginine biosynthesis bifunctional protein ArgJ</fullName>
    </recommendedName>
    <domain>
        <recommendedName>
            <fullName evidence="1">Glutamate N-acetyltransferase</fullName>
            <ecNumber evidence="1">2.3.1.35</ecNumber>
        </recommendedName>
        <alternativeName>
            <fullName evidence="1">Ornithine acetyltransferase</fullName>
            <shortName evidence="1">OATase</shortName>
        </alternativeName>
        <alternativeName>
            <fullName evidence="1">Ornithine transacetylase</fullName>
        </alternativeName>
    </domain>
    <domain>
        <recommendedName>
            <fullName evidence="1">Amino-acid acetyltransferase</fullName>
            <ecNumber evidence="1">2.3.1.1</ecNumber>
        </recommendedName>
        <alternativeName>
            <fullName evidence="1">N-acetylglutamate synthase</fullName>
            <shortName evidence="1">AGSase</shortName>
        </alternativeName>
    </domain>
    <component>
        <recommendedName>
            <fullName evidence="1">Arginine biosynthesis bifunctional protein ArgJ alpha chain</fullName>
        </recommendedName>
    </component>
    <component>
        <recommendedName>
            <fullName evidence="1">Arginine biosynthesis bifunctional protein ArgJ beta chain</fullName>
        </recommendedName>
    </component>
</protein>
<name>ARGJ_SHOC1</name>
<comment type="function">
    <text evidence="1">Catalyzes two activities which are involved in the cyclic version of arginine biosynthesis: the synthesis of N-acetylglutamate from glutamate and acetyl-CoA as the acetyl donor, and of ornithine by transacetylation between N(2)-acetylornithine and glutamate.</text>
</comment>
<comment type="catalytic activity">
    <reaction evidence="1">
        <text>N(2)-acetyl-L-ornithine + L-glutamate = N-acetyl-L-glutamate + L-ornithine</text>
        <dbReference type="Rhea" id="RHEA:15349"/>
        <dbReference type="ChEBI" id="CHEBI:29985"/>
        <dbReference type="ChEBI" id="CHEBI:44337"/>
        <dbReference type="ChEBI" id="CHEBI:46911"/>
        <dbReference type="ChEBI" id="CHEBI:57805"/>
        <dbReference type="EC" id="2.3.1.35"/>
    </reaction>
</comment>
<comment type="catalytic activity">
    <reaction evidence="1">
        <text>L-glutamate + acetyl-CoA = N-acetyl-L-glutamate + CoA + H(+)</text>
        <dbReference type="Rhea" id="RHEA:24292"/>
        <dbReference type="ChEBI" id="CHEBI:15378"/>
        <dbReference type="ChEBI" id="CHEBI:29985"/>
        <dbReference type="ChEBI" id="CHEBI:44337"/>
        <dbReference type="ChEBI" id="CHEBI:57287"/>
        <dbReference type="ChEBI" id="CHEBI:57288"/>
        <dbReference type="EC" id="2.3.1.1"/>
    </reaction>
</comment>
<comment type="pathway">
    <text evidence="1">Amino-acid biosynthesis; L-arginine biosynthesis; L-ornithine and N-acetyl-L-glutamate from L-glutamate and N(2)-acetyl-L-ornithine (cyclic): step 1/1.</text>
</comment>
<comment type="pathway">
    <text evidence="1">Amino-acid biosynthesis; L-arginine biosynthesis; N(2)-acetyl-L-ornithine from L-glutamate: step 1/4.</text>
</comment>
<comment type="subunit">
    <text evidence="1">Heterotetramer of two alpha and two beta chains.</text>
</comment>
<comment type="subcellular location">
    <subcellularLocation>
        <location evidence="1">Cytoplasm</location>
    </subcellularLocation>
</comment>
<comment type="similarity">
    <text evidence="1">Belongs to the ArgJ family.</text>
</comment>
<dbReference type="EC" id="2.3.1.35" evidence="1"/>
<dbReference type="EC" id="2.3.1.1" evidence="1"/>
<dbReference type="EMBL" id="AP006627">
    <property type="protein sequence ID" value="BAD65092.1"/>
    <property type="molecule type" value="Genomic_DNA"/>
</dbReference>
<dbReference type="RefSeq" id="WP_011247400.1">
    <property type="nucleotide sequence ID" value="NC_006582.1"/>
</dbReference>
<dbReference type="SMR" id="Q5WEW8"/>
<dbReference type="STRING" id="66692.ABC2557"/>
<dbReference type="MEROPS" id="T05.002"/>
<dbReference type="KEGG" id="bcl:ABC2557"/>
<dbReference type="eggNOG" id="COG1364">
    <property type="taxonomic scope" value="Bacteria"/>
</dbReference>
<dbReference type="HOGENOM" id="CLU_027172_1_0_9"/>
<dbReference type="OrthoDB" id="9804242at2"/>
<dbReference type="UniPathway" id="UPA00068">
    <property type="reaction ID" value="UER00106"/>
</dbReference>
<dbReference type="UniPathway" id="UPA00068">
    <property type="reaction ID" value="UER00111"/>
</dbReference>
<dbReference type="Proteomes" id="UP000001168">
    <property type="component" value="Chromosome"/>
</dbReference>
<dbReference type="GO" id="GO:0005737">
    <property type="term" value="C:cytoplasm"/>
    <property type="evidence" value="ECO:0007669"/>
    <property type="project" value="UniProtKB-SubCell"/>
</dbReference>
<dbReference type="GO" id="GO:0004358">
    <property type="term" value="F:glutamate N-acetyltransferase activity"/>
    <property type="evidence" value="ECO:0007669"/>
    <property type="project" value="UniProtKB-UniRule"/>
</dbReference>
<dbReference type="GO" id="GO:0004042">
    <property type="term" value="F:L-glutamate N-acetyltransferase activity"/>
    <property type="evidence" value="ECO:0007669"/>
    <property type="project" value="UniProtKB-UniRule"/>
</dbReference>
<dbReference type="GO" id="GO:0006526">
    <property type="term" value="P:L-arginine biosynthetic process"/>
    <property type="evidence" value="ECO:0007669"/>
    <property type="project" value="UniProtKB-UniRule"/>
</dbReference>
<dbReference type="GO" id="GO:0006592">
    <property type="term" value="P:ornithine biosynthetic process"/>
    <property type="evidence" value="ECO:0007669"/>
    <property type="project" value="TreeGrafter"/>
</dbReference>
<dbReference type="CDD" id="cd02152">
    <property type="entry name" value="OAT"/>
    <property type="match status" value="1"/>
</dbReference>
<dbReference type="FunFam" id="3.10.20.340:FF:000001">
    <property type="entry name" value="Arginine biosynthesis bifunctional protein ArgJ, chloroplastic"/>
    <property type="match status" value="1"/>
</dbReference>
<dbReference type="FunFam" id="3.60.70.12:FF:000001">
    <property type="entry name" value="Arginine biosynthesis bifunctional protein ArgJ, chloroplastic"/>
    <property type="match status" value="1"/>
</dbReference>
<dbReference type="FunFam" id="3.30.2330.10:FF:000001">
    <property type="entry name" value="Arginine biosynthesis bifunctional protein ArgJ, mitochondrial"/>
    <property type="match status" value="1"/>
</dbReference>
<dbReference type="Gene3D" id="3.30.2330.10">
    <property type="entry name" value="arginine biosynthesis bifunctional protein suprefamily"/>
    <property type="match status" value="1"/>
</dbReference>
<dbReference type="Gene3D" id="3.10.20.340">
    <property type="entry name" value="ArgJ beta chain, C-terminal domain"/>
    <property type="match status" value="1"/>
</dbReference>
<dbReference type="Gene3D" id="3.60.70.12">
    <property type="entry name" value="L-amino peptidase D-ALA esterase/amidase"/>
    <property type="match status" value="1"/>
</dbReference>
<dbReference type="HAMAP" id="MF_01106">
    <property type="entry name" value="ArgJ"/>
    <property type="match status" value="1"/>
</dbReference>
<dbReference type="InterPro" id="IPR002813">
    <property type="entry name" value="Arg_biosynth_ArgJ"/>
</dbReference>
<dbReference type="InterPro" id="IPR016117">
    <property type="entry name" value="ArgJ-like_dom_sf"/>
</dbReference>
<dbReference type="InterPro" id="IPR042195">
    <property type="entry name" value="ArgJ_beta_C"/>
</dbReference>
<dbReference type="NCBIfam" id="TIGR00120">
    <property type="entry name" value="ArgJ"/>
    <property type="match status" value="1"/>
</dbReference>
<dbReference type="NCBIfam" id="NF003802">
    <property type="entry name" value="PRK05388.1"/>
    <property type="match status" value="1"/>
</dbReference>
<dbReference type="PANTHER" id="PTHR23100">
    <property type="entry name" value="ARGININE BIOSYNTHESIS BIFUNCTIONAL PROTEIN ARGJ"/>
    <property type="match status" value="1"/>
</dbReference>
<dbReference type="PANTHER" id="PTHR23100:SF0">
    <property type="entry name" value="ARGININE BIOSYNTHESIS BIFUNCTIONAL PROTEIN ARGJ, MITOCHONDRIAL"/>
    <property type="match status" value="1"/>
</dbReference>
<dbReference type="Pfam" id="PF01960">
    <property type="entry name" value="ArgJ"/>
    <property type="match status" value="1"/>
</dbReference>
<dbReference type="SUPFAM" id="SSF56266">
    <property type="entry name" value="DmpA/ArgJ-like"/>
    <property type="match status" value="1"/>
</dbReference>
<feature type="chain" id="PRO_0000002117" description="Arginine biosynthesis bifunctional protein ArgJ alpha chain" evidence="1">
    <location>
        <begin position="1"/>
        <end position="194"/>
    </location>
</feature>
<feature type="chain" id="PRO_0000002118" description="Arginine biosynthesis bifunctional protein ArgJ beta chain" evidence="1">
    <location>
        <begin position="195"/>
        <end position="408"/>
    </location>
</feature>
<feature type="active site" description="Nucleophile" evidence="1">
    <location>
        <position position="195"/>
    </location>
</feature>
<feature type="binding site" evidence="1">
    <location>
        <position position="158"/>
    </location>
    <ligand>
        <name>substrate</name>
    </ligand>
</feature>
<feature type="binding site" evidence="1">
    <location>
        <position position="184"/>
    </location>
    <ligand>
        <name>substrate</name>
    </ligand>
</feature>
<feature type="binding site" evidence="1">
    <location>
        <position position="195"/>
    </location>
    <ligand>
        <name>substrate</name>
    </ligand>
</feature>
<feature type="binding site" evidence="1">
    <location>
        <position position="281"/>
    </location>
    <ligand>
        <name>substrate</name>
    </ligand>
</feature>
<feature type="binding site" evidence="1">
    <location>
        <position position="403"/>
    </location>
    <ligand>
        <name>substrate</name>
    </ligand>
</feature>
<feature type="binding site" evidence="1">
    <location>
        <position position="408"/>
    </location>
    <ligand>
        <name>substrate</name>
    </ligand>
</feature>
<feature type="site" description="Involved in the stabilization of negative charge on the oxyanion by the formation of the oxyanion hole" evidence="1">
    <location>
        <position position="124"/>
    </location>
</feature>
<feature type="site" description="Involved in the stabilization of negative charge on the oxyanion by the formation of the oxyanion hole" evidence="1">
    <location>
        <position position="125"/>
    </location>
</feature>
<feature type="site" description="Cleavage; by autolysis" evidence="1">
    <location>
        <begin position="194"/>
        <end position="195"/>
    </location>
</feature>
<gene>
    <name evidence="1" type="primary">argJ</name>
    <name type="ordered locus">ABC2557</name>
</gene>